<dbReference type="EC" id="1.14.13.81" evidence="1"/>
<dbReference type="EMBL" id="BX572597">
    <property type="protein sequence ID" value="CAE26993.1"/>
    <property type="molecule type" value="Genomic_DNA"/>
</dbReference>
<dbReference type="RefSeq" id="WP_011157111.1">
    <property type="nucleotide sequence ID" value="NZ_CP116810.1"/>
</dbReference>
<dbReference type="SMR" id="Q6N9J7"/>
<dbReference type="STRING" id="258594.RPA1552"/>
<dbReference type="DNASU" id="2691628"/>
<dbReference type="GeneID" id="66892582"/>
<dbReference type="eggNOG" id="COG1633">
    <property type="taxonomic scope" value="Bacteria"/>
</dbReference>
<dbReference type="HOGENOM" id="CLU_048037_0_0_5"/>
<dbReference type="UniPathway" id="UPA00671"/>
<dbReference type="GO" id="GO:0005506">
    <property type="term" value="F:iron ion binding"/>
    <property type="evidence" value="ECO:0007669"/>
    <property type="project" value="UniProtKB-UniRule"/>
</dbReference>
<dbReference type="GO" id="GO:0048529">
    <property type="term" value="F:magnesium-protoporphyrin IX monomethyl ester (oxidative) cyclase activity"/>
    <property type="evidence" value="ECO:0007669"/>
    <property type="project" value="UniProtKB-UniRule"/>
</dbReference>
<dbReference type="GO" id="GO:0036070">
    <property type="term" value="P:light-independent bacteriochlorophyll biosynthetic process"/>
    <property type="evidence" value="ECO:0007669"/>
    <property type="project" value="UniProtKB-UniRule"/>
</dbReference>
<dbReference type="GO" id="GO:0015979">
    <property type="term" value="P:photosynthesis"/>
    <property type="evidence" value="ECO:0007669"/>
    <property type="project" value="UniProtKB-UniRule"/>
</dbReference>
<dbReference type="CDD" id="cd01047">
    <property type="entry name" value="ACSF"/>
    <property type="match status" value="1"/>
</dbReference>
<dbReference type="HAMAP" id="MF_01840">
    <property type="entry name" value="AcsF"/>
    <property type="match status" value="1"/>
</dbReference>
<dbReference type="InterPro" id="IPR008434">
    <property type="entry name" value="AcsF"/>
</dbReference>
<dbReference type="InterPro" id="IPR009078">
    <property type="entry name" value="Ferritin-like_SF"/>
</dbReference>
<dbReference type="InterPro" id="IPR003251">
    <property type="entry name" value="Rr_diiron-bd_dom"/>
</dbReference>
<dbReference type="NCBIfam" id="TIGR02029">
    <property type="entry name" value="AcsF"/>
    <property type="match status" value="1"/>
</dbReference>
<dbReference type="NCBIfam" id="NF010172">
    <property type="entry name" value="PRK13654.1"/>
    <property type="match status" value="1"/>
</dbReference>
<dbReference type="PANTHER" id="PTHR31053">
    <property type="entry name" value="MAGNESIUM-PROTOPORPHYRIN IX MONOMETHYL ESTER [OXIDATIVE] CYCLASE, CHLOROPLASTIC"/>
    <property type="match status" value="1"/>
</dbReference>
<dbReference type="PANTHER" id="PTHR31053:SF2">
    <property type="entry name" value="MAGNESIUM-PROTOPORPHYRIN IX MONOMETHYL ESTER [OXIDATIVE] CYCLASE, CHLOROPLASTIC"/>
    <property type="match status" value="1"/>
</dbReference>
<dbReference type="Pfam" id="PF02915">
    <property type="entry name" value="Rubrerythrin"/>
    <property type="match status" value="1"/>
</dbReference>
<dbReference type="SUPFAM" id="SSF47240">
    <property type="entry name" value="Ferritin-like"/>
    <property type="match status" value="1"/>
</dbReference>
<feature type="chain" id="PRO_0000217534" description="Aerobic magnesium-protoporphyrin IX monomethyl ester [oxidative] cyclase">
    <location>
        <begin position="1"/>
        <end position="365"/>
    </location>
</feature>
<keyword id="KW-0077">Bacteriochlorophyll biosynthesis</keyword>
<keyword id="KW-0149">Chlorophyll biosynthesis</keyword>
<keyword id="KW-0408">Iron</keyword>
<keyword id="KW-0479">Metal-binding</keyword>
<keyword id="KW-0521">NADP</keyword>
<keyword id="KW-0560">Oxidoreductase</keyword>
<keyword id="KW-0602">Photosynthesis</keyword>
<organism>
    <name type="scientific">Rhodopseudomonas palustris (strain ATCC BAA-98 / CGA009)</name>
    <dbReference type="NCBI Taxonomy" id="258594"/>
    <lineage>
        <taxon>Bacteria</taxon>
        <taxon>Pseudomonadati</taxon>
        <taxon>Pseudomonadota</taxon>
        <taxon>Alphaproteobacteria</taxon>
        <taxon>Hyphomicrobiales</taxon>
        <taxon>Nitrobacteraceae</taxon>
        <taxon>Rhodopseudomonas</taxon>
    </lineage>
</organism>
<accession>Q6N9J7</accession>
<sequence>MIPMEGGAQGALRTRPDIKGSVDSLNIAKQDTILTPRFYTTDYAAMDKLDVSLVRAEWTAMMNELRADYNKSHFKKTDEFVNSDLDKLPPELRAEFKDFLVSSLTAEFSGCVLYAEIKKRIKNPEIRELFGLLSRDEARHAGFINEILKDHGIGVDLSFLTKVKKYTYFRPKFIFYATYLSEKIGYARYITIYRQMERHPERRFHPIFKWFERWCNDEFRHGEAFALLMRADPSLLSGVNKLWIRFFLLAVFSTMYVRDHMRPAFYEALGVDATDYGMQVFRITTEISKQVFPVTINLDDPRFLQNLERLRIAAEKIDRSHSQGLLGKLKRPFYAASAALAFGRLFLLPAKRNELPRVIGLRPAW</sequence>
<evidence type="ECO:0000255" key="1">
    <source>
        <dbReference type="HAMAP-Rule" id="MF_01840"/>
    </source>
</evidence>
<name>ACSF_RHOPA</name>
<comment type="function">
    <text evidence="1">Catalyzes the formation of the isocyclic ring in chlorophyll biosynthesis. Mediates the cyclase reaction, which results in the formation of divinylprotochlorophyllide (Pchlide) characteristic of all chlorophylls from magnesium-protoporphyrin IX 13-monomethyl ester (MgPMME).</text>
</comment>
<comment type="catalytic activity">
    <reaction evidence="1">
        <text>Mg-protoporphyrin IX 13-monomethyl ester + 3 NADPH + 3 O2 + 2 H(+) = 3,8-divinyl protochlorophyllide a + 3 NADP(+) + 5 H2O</text>
        <dbReference type="Rhea" id="RHEA:33235"/>
        <dbReference type="ChEBI" id="CHEBI:15377"/>
        <dbReference type="ChEBI" id="CHEBI:15378"/>
        <dbReference type="ChEBI" id="CHEBI:15379"/>
        <dbReference type="ChEBI" id="CHEBI:57783"/>
        <dbReference type="ChEBI" id="CHEBI:58349"/>
        <dbReference type="ChEBI" id="CHEBI:58632"/>
        <dbReference type="ChEBI" id="CHEBI:60491"/>
        <dbReference type="EC" id="1.14.13.81"/>
    </reaction>
</comment>
<comment type="cofactor">
    <cofactor evidence="1">
        <name>Fe cation</name>
        <dbReference type="ChEBI" id="CHEBI:24875"/>
    </cofactor>
</comment>
<comment type="pathway">
    <text evidence="1">Porphyrin-containing compound metabolism; bacteriochlorophyll biosynthesis (light-independent).</text>
</comment>
<comment type="similarity">
    <text evidence="1">Belongs to the AcsF family.</text>
</comment>
<protein>
    <recommendedName>
        <fullName evidence="1">Aerobic magnesium-protoporphyrin IX monomethyl ester [oxidative] cyclase</fullName>
        <shortName evidence="1">Aerobic Mg-protoporphyrin IX monomethyl ester oxidative cyclase</shortName>
        <ecNumber evidence="1">1.14.13.81</ecNumber>
    </recommendedName>
</protein>
<reference key="1">
    <citation type="journal article" date="2004" name="Nat. Biotechnol.">
        <title>Complete genome sequence of the metabolically versatile photosynthetic bacterium Rhodopseudomonas palustris.</title>
        <authorList>
            <person name="Larimer F.W."/>
            <person name="Chain P."/>
            <person name="Hauser L."/>
            <person name="Lamerdin J.E."/>
            <person name="Malfatti S."/>
            <person name="Do L."/>
            <person name="Land M.L."/>
            <person name="Pelletier D.A."/>
            <person name="Beatty J.T."/>
            <person name="Lang A.S."/>
            <person name="Tabita F.R."/>
            <person name="Gibson J.L."/>
            <person name="Hanson T.E."/>
            <person name="Bobst C."/>
            <person name="Torres y Torres J.L."/>
            <person name="Peres C."/>
            <person name="Harrison F.H."/>
            <person name="Gibson J."/>
            <person name="Harwood C.S."/>
        </authorList>
    </citation>
    <scope>NUCLEOTIDE SEQUENCE [LARGE SCALE GENOMIC DNA]</scope>
    <source>
        <strain>ATCC BAA-98 / CGA009</strain>
    </source>
</reference>
<proteinExistence type="inferred from homology"/>
<gene>
    <name evidence="1" type="primary">acsF</name>
    <name type="ordered locus">RPA1552</name>
</gene>